<evidence type="ECO:0000250" key="1">
    <source>
        <dbReference type="UniProtKB" id="P16495"/>
    </source>
</evidence>
<evidence type="ECO:0000269" key="2">
    <source>
    </source>
</evidence>
<evidence type="ECO:0000305" key="3"/>
<evidence type="ECO:0007744" key="4">
    <source>
        <dbReference type="PDB" id="4BGP"/>
    </source>
</evidence>
<evidence type="ECO:0007744" key="5">
    <source>
        <dbReference type="PDB" id="4BHH"/>
    </source>
</evidence>
<evidence type="ECO:0007829" key="6">
    <source>
        <dbReference type="PDB" id="4BGP"/>
    </source>
</evidence>
<evidence type="ECO:0007829" key="7">
    <source>
        <dbReference type="PDB" id="4BHH"/>
    </source>
</evidence>
<reference key="1">
    <citation type="journal article" date="1983" name="J. Virol.">
        <title>Comparison of the sequences and coding of La Crosse and snowshoe hare bunyavirus S RNA species.</title>
        <authorList>
            <person name="Akashi H."/>
            <person name="Bishop D.H.L."/>
        </authorList>
    </citation>
    <scope>NUCLEOTIDE SEQUENCE [GENOMIC RNA]</scope>
</reference>
<reference key="2">
    <citation type="journal article" date="1983" name="Virology">
        <title>Molecular cloning and sequencing of the La Crosse virus S RNA.</title>
        <authorList>
            <person name="Cabradilla C.D. Jr."/>
            <person name="Holloway B.P."/>
            <person name="Obijeski J.F."/>
        </authorList>
    </citation>
    <scope>NUCLEOTIDE SEQUENCE [GENOMIC RNA]</scope>
</reference>
<reference evidence="4 5" key="3">
    <citation type="journal article" date="2013" name="Proc. Natl. Acad. Sci. U.S.A.">
        <title>Structural basis for encapsidation of genomic RNA by La Crosse Orthobunyavirus nucleoprotein.</title>
        <authorList>
            <person name="Reguera J."/>
            <person name="Malet H."/>
            <person name="Weber F."/>
            <person name="Cusack S."/>
        </authorList>
    </citation>
    <scope>X-RAY CRYSTALLOGRAPHY (1.80 ANGSTROMS) IN COMPLEX WITH RNA</scope>
    <scope>SUBUNIT</scope>
    <scope>RNA-BINDING</scope>
    <scope>FUNCTION</scope>
</reference>
<sequence length="235" mass="26530">MSDLVFYDVASTGANGFDPDAGYMDFCVKNAESLNLAAVRIFFLNAAKAKAALSRKPERKANPKFGEWQVEVINNHFPGNRNNPIGNNDLTIHRLSGYLARWVLDQYNENDDESQHELIRTTIINPIAESNGVGWDSGPEIYLSFFPGTEMFLETFKFYPLTIGIHRVKQGMMDPQYLKKALRQRYGTLTADKWMSQKVAAIAKSLKDVEQLKWGKGGLSDTAKTFLQKFGIRLP</sequence>
<comment type="function">
    <text evidence="1">Encapsidates the genome protecting it from nucleases. The encapsidated genomic RNA is termed the nucleocapsid (NC) and serves as template for transcription and replication. The NC have a helical organization. Seems to participate in the nuclear relocalization of host PABP1, thereby inhibiting host cellular translation.</text>
</comment>
<comment type="subunit">
    <text evidence="1">Homotetramer. Binds the viral genomic RNA. Interacts with host PABP1.</text>
</comment>
<comment type="subcellular location">
    <subcellularLocation>
        <location evidence="1">Virion</location>
    </subcellularLocation>
    <text evidence="1">Located inside the virion, complexed with the viral RNA.</text>
</comment>
<comment type="alternative products">
    <event type="alternative initiation"/>
    <isoform>
        <id>P04873-1</id>
        <name>N</name>
        <sequence type="displayed"/>
    </isoform>
    <isoform>
        <id>P04874-1</id>
        <name>NSS</name>
        <sequence type="external"/>
    </isoform>
</comment>
<comment type="domain">
    <text evidence="2">The N-terminus and C-terminus are involved in homooligomerization and play an essential role in viral RNA synthesis.</text>
</comment>
<comment type="similarity">
    <text evidence="3">Belongs to the orthobunyavirus nucleocapsid protein family.</text>
</comment>
<protein>
    <recommendedName>
        <fullName>Nucleoprotein</fullName>
    </recommendedName>
    <alternativeName>
        <fullName>Nucleocapsid protein</fullName>
        <shortName>Protein N</shortName>
    </alternativeName>
</protein>
<organismHost>
    <name type="scientific">Cervidae</name>
    <name type="common">Deer</name>
    <dbReference type="NCBI Taxonomy" id="9850"/>
</organismHost>
<organismHost>
    <name type="scientific">Homo sapiens</name>
    <name type="common">Human</name>
    <dbReference type="NCBI Taxonomy" id="9606"/>
</organismHost>
<organismHost>
    <name type="scientific">Ochlerotatus triseriatus</name>
    <name type="common">Eastern treehole mosquito</name>
    <name type="synonym">Aedes triseriatus</name>
    <dbReference type="NCBI Taxonomy" id="7162"/>
</organismHost>
<organismHost>
    <name type="scientific">Tamias</name>
    <dbReference type="NCBI Taxonomy" id="13712"/>
</organismHost>
<name>NCAP_BUNLC</name>
<proteinExistence type="evidence at protein level"/>
<feature type="chain" id="PRO_0000221990" description="Nucleoprotein">
    <location>
        <begin position="1"/>
        <end position="235"/>
    </location>
</feature>
<feature type="binding site" evidence="2 5">
    <location>
        <position position="17"/>
    </location>
    <ligand>
        <name>RNA</name>
        <dbReference type="ChEBI" id="CHEBI:33697"/>
    </ligand>
</feature>
<feature type="binding site" evidence="2 5">
    <location>
        <position position="18"/>
    </location>
    <ligand>
        <name>RNA</name>
        <dbReference type="ChEBI" id="CHEBI:33697"/>
    </ligand>
</feature>
<feature type="binding site" evidence="2 5">
    <location>
        <position position="47"/>
    </location>
    <ligand>
        <name>RNA</name>
        <dbReference type="ChEBI" id="CHEBI:33697"/>
    </ligand>
</feature>
<feature type="binding site" evidence="2 5">
    <location>
        <position position="50"/>
    </location>
    <ligand>
        <name>RNA</name>
        <dbReference type="ChEBI" id="CHEBI:33697"/>
    </ligand>
</feature>
<feature type="binding site" evidence="2 5">
    <location>
        <position position="75"/>
    </location>
    <ligand>
        <name>RNA</name>
        <dbReference type="ChEBI" id="CHEBI:33697"/>
    </ligand>
</feature>
<feature type="binding site" evidence="2 5">
    <location>
        <position position="76"/>
    </location>
    <ligand>
        <name>RNA</name>
        <dbReference type="ChEBI" id="CHEBI:33697"/>
    </ligand>
</feature>
<feature type="binding site" evidence="2 5">
    <location>
        <position position="81"/>
    </location>
    <ligand>
        <name>RNA</name>
        <dbReference type="ChEBI" id="CHEBI:33697"/>
    </ligand>
</feature>
<feature type="binding site" evidence="2 5">
    <location>
        <position position="94"/>
    </location>
    <ligand>
        <name>RNA</name>
        <dbReference type="ChEBI" id="CHEBI:33697"/>
    </ligand>
</feature>
<feature type="binding site" evidence="2 5">
    <location>
        <position position="124"/>
    </location>
    <ligand>
        <name>RNA</name>
        <dbReference type="ChEBI" id="CHEBI:33697"/>
    </ligand>
</feature>
<feature type="binding site" evidence="2 5">
    <location>
        <position position="126"/>
    </location>
    <ligand>
        <name>RNA</name>
        <dbReference type="ChEBI" id="CHEBI:33697"/>
    </ligand>
</feature>
<feature type="binding site" evidence="2 5">
    <location>
        <position position="129"/>
    </location>
    <ligand>
        <name>RNA</name>
        <dbReference type="ChEBI" id="CHEBI:33697"/>
    </ligand>
</feature>
<feature type="binding site" evidence="2 5">
    <location>
        <position position="167"/>
    </location>
    <ligand>
        <name>RNA</name>
        <dbReference type="ChEBI" id="CHEBI:33697"/>
    </ligand>
</feature>
<feature type="binding site" evidence="2 5">
    <location>
        <position position="177"/>
    </location>
    <ligand>
        <name>RNA</name>
        <dbReference type="ChEBI" id="CHEBI:33697"/>
    </ligand>
</feature>
<feature type="binding site" evidence="2 5">
    <location>
        <position position="179"/>
    </location>
    <ligand>
        <name>RNA</name>
        <dbReference type="ChEBI" id="CHEBI:33697"/>
    </ligand>
</feature>
<feature type="binding site" evidence="2 5">
    <location>
        <position position="180"/>
    </location>
    <ligand>
        <name>RNA</name>
        <dbReference type="ChEBI" id="CHEBI:33697"/>
    </ligand>
</feature>
<feature type="binding site" evidence="2 5">
    <location>
        <position position="183"/>
    </location>
    <ligand>
        <name>RNA</name>
        <dbReference type="ChEBI" id="CHEBI:33697"/>
    </ligand>
</feature>
<feature type="binding site" evidence="1">
    <location>
        <position position="184"/>
    </location>
    <ligand>
        <name>RNA</name>
        <dbReference type="ChEBI" id="CHEBI:33697"/>
    </ligand>
</feature>
<feature type="binding site" evidence="2 5">
    <location>
        <position position="185"/>
    </location>
    <ligand>
        <name>RNA</name>
        <dbReference type="ChEBI" id="CHEBI:33697"/>
    </ligand>
</feature>
<feature type="turn" evidence="6">
    <location>
        <begin position="1"/>
        <end position="4"/>
    </location>
</feature>
<feature type="helix" evidence="6">
    <location>
        <begin position="19"/>
        <end position="30"/>
    </location>
</feature>
<feature type="turn" evidence="6">
    <location>
        <begin position="31"/>
        <end position="33"/>
    </location>
</feature>
<feature type="helix" evidence="6">
    <location>
        <begin position="36"/>
        <end position="53"/>
    </location>
</feature>
<feature type="strand" evidence="6">
    <location>
        <begin position="59"/>
        <end position="61"/>
    </location>
</feature>
<feature type="helix" evidence="6">
    <location>
        <begin position="78"/>
        <end position="80"/>
    </location>
</feature>
<feature type="helix" evidence="6">
    <location>
        <begin position="92"/>
        <end position="109"/>
    </location>
</feature>
<feature type="helix" evidence="6">
    <location>
        <begin position="113"/>
        <end position="122"/>
    </location>
</feature>
<feature type="helix" evidence="6">
    <location>
        <begin position="126"/>
        <end position="130"/>
    </location>
</feature>
<feature type="helix" evidence="6">
    <location>
        <begin position="135"/>
        <end position="137"/>
    </location>
</feature>
<feature type="helix" evidence="6">
    <location>
        <begin position="139"/>
        <end position="143"/>
    </location>
</feature>
<feature type="helix" evidence="6">
    <location>
        <begin position="149"/>
        <end position="152"/>
    </location>
</feature>
<feature type="turn" evidence="6">
    <location>
        <begin position="153"/>
        <end position="158"/>
    </location>
</feature>
<feature type="helix" evidence="6">
    <location>
        <begin position="159"/>
        <end position="169"/>
    </location>
</feature>
<feature type="helix" evidence="6">
    <location>
        <begin position="175"/>
        <end position="178"/>
    </location>
</feature>
<feature type="helix" evidence="6">
    <location>
        <begin position="179"/>
        <end position="182"/>
    </location>
</feature>
<feature type="strand" evidence="7">
    <location>
        <begin position="186"/>
        <end position="188"/>
    </location>
</feature>
<feature type="helix" evidence="6">
    <location>
        <begin position="191"/>
        <end position="197"/>
    </location>
</feature>
<feature type="helix" evidence="6">
    <location>
        <begin position="199"/>
        <end position="210"/>
    </location>
</feature>
<feature type="helix" evidence="6">
    <location>
        <begin position="221"/>
        <end position="228"/>
    </location>
</feature>
<feature type="turn" evidence="6">
    <location>
        <begin position="229"/>
        <end position="231"/>
    </location>
</feature>
<keyword id="KW-0002">3D-structure</keyword>
<keyword id="KW-0024">Alternative initiation</keyword>
<keyword id="KW-0167">Capsid protein</keyword>
<keyword id="KW-1262">Eukaryotic host gene expression shutoff by virus</keyword>
<keyword id="KW-1193">Eukaryotic host translation shutoff by virus</keyword>
<keyword id="KW-1139">Helical capsid protein</keyword>
<keyword id="KW-1190">Host gene expression shutoff by virus</keyword>
<keyword id="KW-0945">Host-virus interaction</keyword>
<keyword id="KW-1185">Reference proteome</keyword>
<keyword id="KW-0687">Ribonucleoprotein</keyword>
<keyword id="KW-0694">RNA-binding</keyword>
<keyword id="KW-0543">Viral nucleoprotein</keyword>
<keyword id="KW-0946">Virion</keyword>
<gene>
    <name type="primary">N</name>
</gene>
<organism>
    <name type="scientific">Bunyavirus La Crosse</name>
    <dbReference type="NCBI Taxonomy" id="11577"/>
    <lineage>
        <taxon>Viruses</taxon>
        <taxon>Riboviria</taxon>
        <taxon>Orthornavirae</taxon>
        <taxon>Negarnaviricota</taxon>
        <taxon>Polyploviricotina</taxon>
        <taxon>Ellioviricetes</taxon>
        <taxon>Bunyavirales</taxon>
        <taxon>Peribunyaviridae</taxon>
        <taxon>Orthobunyavirus</taxon>
        <taxon>Orthobunyavirus lacrosseense</taxon>
    </lineage>
</organism>
<dbReference type="EMBL" id="K00610">
    <property type="protein sequence ID" value="AAA42782.1"/>
    <property type="molecule type" value="Genomic_RNA"/>
</dbReference>
<dbReference type="EMBL" id="K00108">
    <property type="protein sequence ID" value="AAA42779.1"/>
    <property type="molecule type" value="Genomic_RNA"/>
</dbReference>
<dbReference type="PIR" id="A04104">
    <property type="entry name" value="VHVULV"/>
</dbReference>
<dbReference type="PDB" id="4BGP">
    <property type="method" value="X-ray"/>
    <property type="resolution" value="1.80 A"/>
    <property type="chains" value="A=1-235"/>
</dbReference>
<dbReference type="PDB" id="4BHH">
    <property type="method" value="X-ray"/>
    <property type="resolution" value="3.40 A"/>
    <property type="chains" value="B/D/F/Z=1-235"/>
</dbReference>
<dbReference type="PDBsum" id="4BGP"/>
<dbReference type="PDBsum" id="4BHH"/>
<dbReference type="SMR" id="P04873"/>
<dbReference type="IntAct" id="P04873">
    <property type="interactions" value="3"/>
</dbReference>
<dbReference type="EvolutionaryTrace" id="P04873"/>
<dbReference type="Proteomes" id="UP000232774">
    <property type="component" value="Genome"/>
</dbReference>
<dbReference type="GO" id="GO:0019029">
    <property type="term" value="C:helical viral capsid"/>
    <property type="evidence" value="ECO:0007669"/>
    <property type="project" value="UniProtKB-KW"/>
</dbReference>
<dbReference type="GO" id="GO:1990904">
    <property type="term" value="C:ribonucleoprotein complex"/>
    <property type="evidence" value="ECO:0007669"/>
    <property type="project" value="UniProtKB-KW"/>
</dbReference>
<dbReference type="GO" id="GO:0019013">
    <property type="term" value="C:viral nucleocapsid"/>
    <property type="evidence" value="ECO:0007669"/>
    <property type="project" value="UniProtKB-KW"/>
</dbReference>
<dbReference type="GO" id="GO:0003723">
    <property type="term" value="F:RNA binding"/>
    <property type="evidence" value="ECO:0007669"/>
    <property type="project" value="UniProtKB-KW"/>
</dbReference>
<dbReference type="GO" id="GO:0039657">
    <property type="term" value="P:symbiont-mediated suppression of host gene expression"/>
    <property type="evidence" value="ECO:0007669"/>
    <property type="project" value="UniProtKB-KW"/>
</dbReference>
<dbReference type="Gene3D" id="1.20.142.20">
    <property type="match status" value="1"/>
</dbReference>
<dbReference type="Gene3D" id="1.10.472.180">
    <property type="entry name" value="Bunyavirus nucleocapsid (N) protein, C-terminal domain"/>
    <property type="match status" value="1"/>
</dbReference>
<dbReference type="InterPro" id="IPR001784">
    <property type="entry name" value="Bunya_nucleocap"/>
</dbReference>
<dbReference type="InterPro" id="IPR043011">
    <property type="entry name" value="Bunya_nucleocap_C"/>
</dbReference>
<dbReference type="InterPro" id="IPR043012">
    <property type="entry name" value="Bunya_nucleocap_N"/>
</dbReference>
<dbReference type="Pfam" id="PF00952">
    <property type="entry name" value="Bunya_nucleocap"/>
    <property type="match status" value="1"/>
</dbReference>
<dbReference type="PIRSF" id="PIRSF003947">
    <property type="entry name" value="N_OrthobunV"/>
    <property type="match status" value="1"/>
</dbReference>
<accession>P04873</accession>